<keyword id="KW-0472">Membrane</keyword>
<keyword id="KW-1185">Reference proteome</keyword>
<keyword id="KW-0677">Repeat</keyword>
<keyword id="KW-0762">Sugar transport</keyword>
<keyword id="KW-0812">Transmembrane</keyword>
<keyword id="KW-1133">Transmembrane helix</keyword>
<keyword id="KW-0813">Transport</keyword>
<accession>P42833</accession>
<accession>D6W0M7</accession>
<proteinExistence type="evidence at protein level"/>
<evidence type="ECO:0000255" key="1"/>
<evidence type="ECO:0000305" key="2"/>
<reference key="1">
    <citation type="journal article" date="1995" name="Yeast">
        <title>Sequencing analysis of a 24.7 kb fragment of yeast chromosome XIV identifies six known genes, a new member of the hexose transporter family and ten new open reading frames.</title>
        <authorList>
            <person name="Maftahi M."/>
            <person name="Nicaud J.-M."/>
            <person name="Levesque H."/>
            <person name="Gaillardin C."/>
        </authorList>
    </citation>
    <scope>NUCLEOTIDE SEQUENCE [GENOMIC DNA]</scope>
    <source>
        <strain>S288c / FY1676</strain>
    </source>
</reference>
<reference key="2">
    <citation type="journal article" date="1997" name="Nature">
        <title>The nucleotide sequence of Saccharomyces cerevisiae chromosome XIV and its evolutionary implications.</title>
        <authorList>
            <person name="Philippsen P."/>
            <person name="Kleine K."/>
            <person name="Poehlmann R."/>
            <person name="Duesterhoeft A."/>
            <person name="Hamberg K."/>
            <person name="Hegemann J.H."/>
            <person name="Obermaier B."/>
            <person name="Urrestarazu L.A."/>
            <person name="Aert R."/>
            <person name="Albermann K."/>
            <person name="Altmann R."/>
            <person name="Andre B."/>
            <person name="Baladron V."/>
            <person name="Ballesta J.P.G."/>
            <person name="Becam A.-M."/>
            <person name="Beinhauer J.D."/>
            <person name="Boskovic J."/>
            <person name="Buitrago M.J."/>
            <person name="Bussereau F."/>
            <person name="Coster F."/>
            <person name="Crouzet M."/>
            <person name="D'Angelo M."/>
            <person name="Dal Pero F."/>
            <person name="De Antoni A."/>
            <person name="del Rey F."/>
            <person name="Doignon F."/>
            <person name="Domdey H."/>
            <person name="Dubois E."/>
            <person name="Fiedler T.A."/>
            <person name="Fleig U."/>
            <person name="Floeth M."/>
            <person name="Fritz C."/>
            <person name="Gaillardin C."/>
            <person name="Garcia-Cantalejo J.M."/>
            <person name="Glansdorff N."/>
            <person name="Goffeau A."/>
            <person name="Gueldener U."/>
            <person name="Herbert C.J."/>
            <person name="Heumann K."/>
            <person name="Heuss-Neitzel D."/>
            <person name="Hilbert H."/>
            <person name="Hinni K."/>
            <person name="Iraqui Houssaini I."/>
            <person name="Jacquet M."/>
            <person name="Jimenez A."/>
            <person name="Jonniaux J.-L."/>
            <person name="Karpfinger-Hartl L."/>
            <person name="Lanfranchi G."/>
            <person name="Lepingle A."/>
            <person name="Levesque H."/>
            <person name="Lyck R."/>
            <person name="Maftahi M."/>
            <person name="Mallet L."/>
            <person name="Maurer C.T.C."/>
            <person name="Messenguy F."/>
            <person name="Mewes H.-W."/>
            <person name="Moestl D."/>
            <person name="Nasr F."/>
            <person name="Nicaud J.-M."/>
            <person name="Niedenthal R.K."/>
            <person name="Pandolfo D."/>
            <person name="Pierard A."/>
            <person name="Piravandi E."/>
            <person name="Planta R.J."/>
            <person name="Pohl T.M."/>
            <person name="Purnelle B."/>
            <person name="Rebischung C."/>
            <person name="Remacha M.A."/>
            <person name="Revuelta J.L."/>
            <person name="Rinke M."/>
            <person name="Saiz J.E."/>
            <person name="Sartorello F."/>
            <person name="Scherens B."/>
            <person name="Sen-Gupta M."/>
            <person name="Soler-Mira A."/>
            <person name="Urbanus J.H.M."/>
            <person name="Valle G."/>
            <person name="Van Dyck L."/>
            <person name="Verhasselt P."/>
            <person name="Vierendeels F."/>
            <person name="Vissers S."/>
            <person name="Voet M."/>
            <person name="Volckaert G."/>
            <person name="Wach A."/>
            <person name="Wambutt R."/>
            <person name="Wedler H."/>
            <person name="Zollner A."/>
            <person name="Hani J."/>
        </authorList>
    </citation>
    <scope>NUCLEOTIDE SEQUENCE [LARGE SCALE GENOMIC DNA]</scope>
    <source>
        <strain>ATCC 204508 / S288c</strain>
    </source>
</reference>
<reference key="3">
    <citation type="journal article" date="2014" name="G3 (Bethesda)">
        <title>The reference genome sequence of Saccharomyces cerevisiae: Then and now.</title>
        <authorList>
            <person name="Engel S.R."/>
            <person name="Dietrich F.S."/>
            <person name="Fisk D.G."/>
            <person name="Binkley G."/>
            <person name="Balakrishnan R."/>
            <person name="Costanzo M.C."/>
            <person name="Dwight S.S."/>
            <person name="Hitz B.C."/>
            <person name="Karra K."/>
            <person name="Nash R.S."/>
            <person name="Weng S."/>
            <person name="Wong E.D."/>
            <person name="Lloyd P."/>
            <person name="Skrzypek M.S."/>
            <person name="Miyasato S.R."/>
            <person name="Simison M."/>
            <person name="Cherry J.M."/>
        </authorList>
    </citation>
    <scope>GENOME REANNOTATION</scope>
    <source>
        <strain>ATCC 204508 / S288c</strain>
    </source>
</reference>
<reference key="4">
    <citation type="journal article" date="2006" name="Proc. Natl. Acad. Sci. U.S.A.">
        <title>A global topology map of the Saccharomyces cerevisiae membrane proteome.</title>
        <authorList>
            <person name="Kim H."/>
            <person name="Melen K."/>
            <person name="Oesterberg M."/>
            <person name="von Heijne G."/>
        </authorList>
    </citation>
    <scope>TOPOLOGY [LARGE SCALE ANALYSIS]</scope>
    <source>
        <strain>ATCC 208353 / W303-1A</strain>
    </source>
</reference>
<protein>
    <recommendedName>
        <fullName>Hexose transporter HXT14</fullName>
    </recommendedName>
</protein>
<feature type="chain" id="PRO_0000050403" description="Hexose transporter HXT14">
    <location>
        <begin position="1"/>
        <end position="540"/>
    </location>
</feature>
<feature type="topological domain" description="Cytoplasmic" evidence="1">
    <location>
        <begin position="1"/>
        <end position="56"/>
    </location>
</feature>
<feature type="transmembrane region" description="Helical; Name=1" evidence="1">
    <location>
        <begin position="57"/>
        <end position="76"/>
    </location>
</feature>
<feature type="topological domain" description="Extracellular" evidence="1">
    <location>
        <begin position="77"/>
        <end position="119"/>
    </location>
</feature>
<feature type="transmembrane region" description="Helical; Name=2" evidence="1">
    <location>
        <begin position="120"/>
        <end position="140"/>
    </location>
</feature>
<feature type="topological domain" description="Cytoplasmic" evidence="1">
    <location>
        <begin position="141"/>
        <end position="146"/>
    </location>
</feature>
<feature type="transmembrane region" description="Helical; Name=3" evidence="1">
    <location>
        <begin position="147"/>
        <end position="167"/>
    </location>
</feature>
<feature type="topological domain" description="Extracellular" evidence="1">
    <location>
        <begin position="168"/>
        <end position="177"/>
    </location>
</feature>
<feature type="transmembrane region" description="Helical; Name=4" evidence="1">
    <location>
        <begin position="178"/>
        <end position="198"/>
    </location>
</feature>
<feature type="topological domain" description="Cytoplasmic" evidence="1">
    <location>
        <begin position="199"/>
        <end position="204"/>
    </location>
</feature>
<feature type="transmembrane region" description="Helical; Name=5" evidence="1">
    <location>
        <begin position="205"/>
        <end position="225"/>
    </location>
</feature>
<feature type="topological domain" description="Extracellular" evidence="1">
    <location>
        <begin position="226"/>
        <end position="243"/>
    </location>
</feature>
<feature type="transmembrane region" description="Helical; Name=6" evidence="1">
    <location>
        <begin position="244"/>
        <end position="264"/>
    </location>
</feature>
<feature type="topological domain" description="Cytoplasmic" evidence="1">
    <location>
        <begin position="265"/>
        <end position="357"/>
    </location>
</feature>
<feature type="transmembrane region" description="Helical; Name=7" evidence="1">
    <location>
        <begin position="358"/>
        <end position="374"/>
    </location>
</feature>
<feature type="topological domain" description="Extracellular" evidence="1">
    <location>
        <begin position="375"/>
        <end position="380"/>
    </location>
</feature>
<feature type="transmembrane region" description="Helical; Name=8" evidence="1">
    <location>
        <begin position="381"/>
        <end position="398"/>
    </location>
</feature>
<feature type="topological domain" description="Cytoplasmic" evidence="1">
    <location>
        <begin position="399"/>
        <end position="405"/>
    </location>
</feature>
<feature type="transmembrane region" description="Helical; Name=9" evidence="1">
    <location>
        <begin position="406"/>
        <end position="426"/>
    </location>
</feature>
<feature type="topological domain" description="Extracellular" evidence="1">
    <location>
        <begin position="427"/>
        <end position="440"/>
    </location>
</feature>
<feature type="transmembrane region" description="Helical; Name=10" evidence="1">
    <location>
        <begin position="441"/>
        <end position="461"/>
    </location>
</feature>
<feature type="topological domain" description="Cytoplasmic" evidence="1">
    <location>
        <begin position="462"/>
        <end position="478"/>
    </location>
</feature>
<feature type="transmembrane region" description="Helical; Name=11" evidence="1">
    <location>
        <begin position="479"/>
        <end position="499"/>
    </location>
</feature>
<feature type="topological domain" description="Extracellular" evidence="1">
    <location>
        <position position="500"/>
    </location>
</feature>
<feature type="transmembrane region" description="Helical; Name=12" evidence="1">
    <location>
        <begin position="501"/>
        <end position="521"/>
    </location>
</feature>
<feature type="topological domain" description="Cytoplasmic" evidence="1">
    <location>
        <begin position="522"/>
        <end position="540"/>
    </location>
</feature>
<organism>
    <name type="scientific">Saccharomyces cerevisiae (strain ATCC 204508 / S288c)</name>
    <name type="common">Baker's yeast</name>
    <dbReference type="NCBI Taxonomy" id="559292"/>
    <lineage>
        <taxon>Eukaryota</taxon>
        <taxon>Fungi</taxon>
        <taxon>Dikarya</taxon>
        <taxon>Ascomycota</taxon>
        <taxon>Saccharomycotina</taxon>
        <taxon>Saccharomycetes</taxon>
        <taxon>Saccharomycetales</taxon>
        <taxon>Saccharomycetaceae</taxon>
        <taxon>Saccharomyces</taxon>
    </lineage>
</organism>
<sequence>MTAQIPYQHSSGYISHFHNNELDAGRGRDYNVTIKYLDDKEENIEGQAAKISHNASLHIPVLLCLVISLGGFIFGWDIGTIGGMTNMVSFQEKFGTTNIIHDDETIFVSTKKLTDLQIGLIISIFNISCGVGALTLSKIGDWIGRKGGIWFALVVYCIGITIQILSYGRWYFLTLGRAVTGIGVGVTTVLVPMFLSENSPLKIRGSMVSTYQLIVTFGILMGNILNFICERCYKDPTQNIAWQLPLFLGYIWAIIIGMSLVYVPESPQYLAKIKNDVPSAKYSFARMNGIPATDSMVIEFIDDLLENNYNNEETNNESKKQSLVKRNTFEFIMGKPKLWLRLIIGMMIMAFQQLSGINYFFYYGTSVFKGVGIKDPYITSIILSSVNFLSTILGIYYVEKWGHKTCLLYGSTNLLFYMMTYATVGTFGRETDFSNIVLIIVTCCFIFWFAITLGPVTFVLVSELFPLRTRAISMAICTFINWMFNFLISLLTPMIVSKIDFKLGYIFAACLLALIIFSWILVPETRKKNEQEINKIFEPE</sequence>
<gene>
    <name type="primary">HXT14</name>
    <name type="synonym">HXT9</name>
    <name type="ordered locus">YNL318C</name>
    <name type="ORF">N0345</name>
</gene>
<comment type="function">
    <text>Probable glucose transporter.</text>
</comment>
<comment type="subcellular location">
    <subcellularLocation>
        <location>Membrane</location>
        <topology>Multi-pass membrane protein</topology>
    </subcellularLocation>
</comment>
<comment type="similarity">
    <text evidence="2">Belongs to the major facilitator superfamily. Sugar transporter (TC 2.A.1.1) family.</text>
</comment>
<name>HXT14_YEAST</name>
<dbReference type="EMBL" id="Z46259">
    <property type="status" value="NOT_ANNOTATED_CDS"/>
    <property type="molecule type" value="Genomic_DNA"/>
</dbReference>
<dbReference type="EMBL" id="Z71595">
    <property type="protein sequence ID" value="CAA96250.1"/>
    <property type="molecule type" value="Genomic_DNA"/>
</dbReference>
<dbReference type="EMBL" id="BK006947">
    <property type="protein sequence ID" value="DAA10243.1"/>
    <property type="molecule type" value="Genomic_DNA"/>
</dbReference>
<dbReference type="PIR" id="S63299">
    <property type="entry name" value="S63299"/>
</dbReference>
<dbReference type="RefSeq" id="NP_014081.1">
    <property type="nucleotide sequence ID" value="NM_001183156.1"/>
</dbReference>
<dbReference type="SMR" id="P42833"/>
<dbReference type="BioGRID" id="35521">
    <property type="interactions" value="21"/>
</dbReference>
<dbReference type="DIP" id="DIP-8115N"/>
<dbReference type="FunCoup" id="P42833">
    <property type="interactions" value="1736"/>
</dbReference>
<dbReference type="IntAct" id="P42833">
    <property type="interactions" value="2"/>
</dbReference>
<dbReference type="MINT" id="P42833"/>
<dbReference type="STRING" id="4932.YNL318C"/>
<dbReference type="TCDB" id="2.A.1.1.109">
    <property type="family name" value="the major facilitator superfamily (mfs)"/>
</dbReference>
<dbReference type="PaxDb" id="4932-YNL318C"/>
<dbReference type="TopDownProteomics" id="P42833"/>
<dbReference type="EnsemblFungi" id="YNL318C_mRNA">
    <property type="protein sequence ID" value="YNL318C"/>
    <property type="gene ID" value="YNL318C"/>
</dbReference>
<dbReference type="GeneID" id="855398"/>
<dbReference type="KEGG" id="sce:YNL318C"/>
<dbReference type="AGR" id="SGD:S000005262"/>
<dbReference type="SGD" id="S000005262">
    <property type="gene designation" value="HXT14"/>
</dbReference>
<dbReference type="VEuPathDB" id="FungiDB:YNL318C"/>
<dbReference type="eggNOG" id="KOG0254">
    <property type="taxonomic scope" value="Eukaryota"/>
</dbReference>
<dbReference type="HOGENOM" id="CLU_001265_30_1_1"/>
<dbReference type="InParanoid" id="P42833"/>
<dbReference type="OMA" id="IFGWDVG"/>
<dbReference type="OrthoDB" id="2241241at2759"/>
<dbReference type="BioCyc" id="YEAST:G3O-33304-MONOMER"/>
<dbReference type="BioGRID-ORCS" id="855398">
    <property type="hits" value="0 hits in 10 CRISPR screens"/>
</dbReference>
<dbReference type="PRO" id="PR:P42833"/>
<dbReference type="Proteomes" id="UP000002311">
    <property type="component" value="Chromosome XIV"/>
</dbReference>
<dbReference type="RNAct" id="P42833">
    <property type="molecule type" value="protein"/>
</dbReference>
<dbReference type="GO" id="GO:0071944">
    <property type="term" value="C:cell periphery"/>
    <property type="evidence" value="ECO:0007005"/>
    <property type="project" value="SGD"/>
</dbReference>
<dbReference type="GO" id="GO:0000324">
    <property type="term" value="C:fungal-type vacuole"/>
    <property type="evidence" value="ECO:0007005"/>
    <property type="project" value="SGD"/>
</dbReference>
<dbReference type="GO" id="GO:0005739">
    <property type="term" value="C:mitochondrion"/>
    <property type="evidence" value="ECO:0007005"/>
    <property type="project" value="SGD"/>
</dbReference>
<dbReference type="GO" id="GO:0005886">
    <property type="term" value="C:plasma membrane"/>
    <property type="evidence" value="ECO:0000318"/>
    <property type="project" value="GO_Central"/>
</dbReference>
<dbReference type="GO" id="GO:0005351">
    <property type="term" value="F:carbohydrate:proton symporter activity"/>
    <property type="evidence" value="ECO:0000318"/>
    <property type="project" value="GO_Central"/>
</dbReference>
<dbReference type="GO" id="GO:0005354">
    <property type="term" value="F:galactose transmembrane transporter activity"/>
    <property type="evidence" value="ECO:0000315"/>
    <property type="project" value="SGD"/>
</dbReference>
<dbReference type="GO" id="GO:0008643">
    <property type="term" value="P:carbohydrate transport"/>
    <property type="evidence" value="ECO:0000318"/>
    <property type="project" value="GO_Central"/>
</dbReference>
<dbReference type="GO" id="GO:0008645">
    <property type="term" value="P:hexose transmembrane transport"/>
    <property type="evidence" value="ECO:0000315"/>
    <property type="project" value="SGD"/>
</dbReference>
<dbReference type="CDD" id="cd17356">
    <property type="entry name" value="MFS_HXT"/>
    <property type="match status" value="1"/>
</dbReference>
<dbReference type="FunFam" id="1.20.1250.20:FF:000658">
    <property type="entry name" value="Hexose transporter"/>
    <property type="match status" value="1"/>
</dbReference>
<dbReference type="Gene3D" id="1.20.1250.20">
    <property type="entry name" value="MFS general substrate transporter like domains"/>
    <property type="match status" value="1"/>
</dbReference>
<dbReference type="InterPro" id="IPR020846">
    <property type="entry name" value="MFS_dom"/>
</dbReference>
<dbReference type="InterPro" id="IPR005828">
    <property type="entry name" value="MFS_sugar_transport-like"/>
</dbReference>
<dbReference type="InterPro" id="IPR050360">
    <property type="entry name" value="MFS_Sugar_Transporters"/>
</dbReference>
<dbReference type="InterPro" id="IPR036259">
    <property type="entry name" value="MFS_trans_sf"/>
</dbReference>
<dbReference type="InterPro" id="IPR003663">
    <property type="entry name" value="Sugar/inositol_transpt"/>
</dbReference>
<dbReference type="InterPro" id="IPR005829">
    <property type="entry name" value="Sugar_transporter_CS"/>
</dbReference>
<dbReference type="NCBIfam" id="TIGR00879">
    <property type="entry name" value="SP"/>
    <property type="match status" value="1"/>
</dbReference>
<dbReference type="PANTHER" id="PTHR48022:SF50">
    <property type="entry name" value="HEXOSE TRANSPORTER HXT14"/>
    <property type="match status" value="1"/>
</dbReference>
<dbReference type="PANTHER" id="PTHR48022">
    <property type="entry name" value="PLASTIDIC GLUCOSE TRANSPORTER 4"/>
    <property type="match status" value="1"/>
</dbReference>
<dbReference type="Pfam" id="PF00083">
    <property type="entry name" value="Sugar_tr"/>
    <property type="match status" value="1"/>
</dbReference>
<dbReference type="PRINTS" id="PR00171">
    <property type="entry name" value="SUGRTRNSPORT"/>
</dbReference>
<dbReference type="SUPFAM" id="SSF103473">
    <property type="entry name" value="MFS general substrate transporter"/>
    <property type="match status" value="1"/>
</dbReference>
<dbReference type="PROSITE" id="PS50850">
    <property type="entry name" value="MFS"/>
    <property type="match status" value="1"/>
</dbReference>
<dbReference type="PROSITE" id="PS00217">
    <property type="entry name" value="SUGAR_TRANSPORT_2"/>
    <property type="match status" value="1"/>
</dbReference>